<sequence length="174" mass="17937">MIYARANPELINPVTVPTEISEVVLVLANTIRRSPAFTGILKPVTIPLNTVPTDINAEDATSNSTIAPAKGSNTPGFAASSLYTCVLKNIGSNTAEIATETWNAVANDVITVSRGALHAIFGNNPCTGPVKSKLTPTNVTLGDDTPKSYDAPVSAIPPPATATTANATGVKPLE</sequence>
<organismHost>
    <name type="scientific">Acanthamoeba polyphaga</name>
    <name type="common">Amoeba</name>
    <dbReference type="NCBI Taxonomy" id="5757"/>
</organismHost>
<name>YR070_MIMIV</name>
<keyword id="KW-1185">Reference proteome</keyword>
<evidence type="ECO:0000256" key="1">
    <source>
        <dbReference type="SAM" id="MobiDB-lite"/>
    </source>
</evidence>
<organism>
    <name type="scientific">Acanthamoeba polyphaga mimivirus</name>
    <name type="common">APMV</name>
    <dbReference type="NCBI Taxonomy" id="212035"/>
    <lineage>
        <taxon>Viruses</taxon>
        <taxon>Varidnaviria</taxon>
        <taxon>Bamfordvirae</taxon>
        <taxon>Nucleocytoviricota</taxon>
        <taxon>Megaviricetes</taxon>
        <taxon>Imitervirales</taxon>
        <taxon>Mimiviridae</taxon>
        <taxon>Megamimivirinae</taxon>
        <taxon>Mimivirus</taxon>
        <taxon>Mimivirus bradfordmassiliense</taxon>
    </lineage>
</organism>
<feature type="chain" id="PRO_0000253258" description="Uncharacterized protein R70">
    <location>
        <begin position="1"/>
        <end position="174"/>
    </location>
</feature>
<feature type="region of interest" description="Disordered" evidence="1">
    <location>
        <begin position="137"/>
        <end position="174"/>
    </location>
</feature>
<dbReference type="EMBL" id="AY653733">
    <property type="protein sequence ID" value="AAV50345.1"/>
    <property type="molecule type" value="Genomic_DNA"/>
</dbReference>
<dbReference type="Proteomes" id="UP000001134">
    <property type="component" value="Genome"/>
</dbReference>
<gene>
    <name type="ordered locus">MIMI_R70</name>
</gene>
<proteinExistence type="predicted"/>
<protein>
    <recommendedName>
        <fullName>Uncharacterized protein R70</fullName>
    </recommendedName>
</protein>
<reference key="1">
    <citation type="journal article" date="2004" name="Science">
        <title>The 1.2-megabase genome sequence of Mimivirus.</title>
        <authorList>
            <person name="Raoult D."/>
            <person name="Audic S."/>
            <person name="Robert C."/>
            <person name="Abergel C."/>
            <person name="Renesto P."/>
            <person name="Ogata H."/>
            <person name="La Scola B."/>
            <person name="Susan M."/>
            <person name="Claverie J.-M."/>
        </authorList>
    </citation>
    <scope>NUCLEOTIDE SEQUENCE [LARGE SCALE GENOMIC DNA]</scope>
    <source>
        <strain>Rowbotham-Bradford</strain>
    </source>
</reference>
<accession>Q5UPE5</accession>